<evidence type="ECO:0000250" key="1"/>
<evidence type="ECO:0000255" key="2"/>
<evidence type="ECO:0000256" key="3">
    <source>
        <dbReference type="SAM" id="MobiDB-lite"/>
    </source>
</evidence>
<evidence type="ECO:0000269" key="4">
    <source>
    </source>
</evidence>
<evidence type="ECO:0000269" key="5">
    <source>
    </source>
</evidence>
<evidence type="ECO:0000305" key="6"/>
<gene>
    <name type="primary">urg1</name>
    <name type="ORF">SPAC1002.19</name>
</gene>
<comment type="subcellular location">
    <subcellularLocation>
        <location evidence="4">Cytoplasm</location>
    </subcellularLocation>
    <subcellularLocation>
        <location evidence="4">Nucleus</location>
    </subcellularLocation>
</comment>
<comment type="induction">
    <text evidence="5">Strongly increased in response to uracil.</text>
</comment>
<comment type="similarity">
    <text evidence="6">Belongs to the GTP cyclohydrolase II family.</text>
</comment>
<feature type="chain" id="PRO_0000353828" description="Uracil-regulated protein 1">
    <location>
        <begin position="1"/>
        <end position="439"/>
    </location>
</feature>
<feature type="region of interest" description="Disordered" evidence="3">
    <location>
        <begin position="1"/>
        <end position="24"/>
    </location>
</feature>
<feature type="active site" description="Proton acceptor" evidence="2">
    <location>
        <position position="353"/>
    </location>
</feature>
<feature type="active site" description="Nucleophile" evidence="1">
    <location>
        <position position="355"/>
    </location>
</feature>
<feature type="binding site" evidence="1">
    <location>
        <begin position="268"/>
        <end position="272"/>
    </location>
    <ligand>
        <name>GTP</name>
        <dbReference type="ChEBI" id="CHEBI:37565"/>
    </ligand>
</feature>
<feature type="binding site" evidence="1">
    <location>
        <position position="273"/>
    </location>
    <ligand>
        <name>Zn(2+)</name>
        <dbReference type="ChEBI" id="CHEBI:29105"/>
        <note>catalytic</note>
    </ligand>
</feature>
<feature type="binding site" evidence="1">
    <location>
        <position position="284"/>
    </location>
    <ligand>
        <name>Zn(2+)</name>
        <dbReference type="ChEBI" id="CHEBI:29105"/>
        <note>catalytic</note>
    </ligand>
</feature>
<feature type="binding site" evidence="1">
    <location>
        <position position="286"/>
    </location>
    <ligand>
        <name>Zn(2+)</name>
        <dbReference type="ChEBI" id="CHEBI:29105"/>
        <note>catalytic</note>
    </ligand>
</feature>
<feature type="binding site" evidence="1">
    <location>
        <begin position="315"/>
        <end position="317"/>
    </location>
    <ligand>
        <name>GTP</name>
        <dbReference type="ChEBI" id="CHEBI:37565"/>
    </ligand>
</feature>
<feature type="binding site" evidence="1">
    <location>
        <position position="377"/>
    </location>
    <ligand>
        <name>GTP</name>
        <dbReference type="ChEBI" id="CHEBI:37565"/>
    </ligand>
</feature>
<feature type="binding site" evidence="1">
    <location>
        <position position="382"/>
    </location>
    <ligand>
        <name>GTP</name>
        <dbReference type="ChEBI" id="CHEBI:37565"/>
    </ligand>
</feature>
<sequence length="439" mass="49035">MLATEQSRPAECNGAHAHEKTEEVKKPLYSRPVVLTTYPSQSRIDPFPMNWGAATAEERGPITVARSIETLPHRNAVGAHGGSYSVYNALAVAGGFLPPDHRPNFELTEPTFDFPELDSWHDPKKIVAMDPYGHLTPSVFKKYLDEGYDVRPTIAITRAHLQVTEIQRSVENGSLPIDGKIVLNEKGDIAVTKVAVEPVWYLPGVAERFGVDEVTLRRALFEQMGGAYPELITRPDIKVFLPPIGGLTAYIFGPPEYLSDTSKSLAVRVHDECNGSDVFQSDICTCRPYLTFGIEEAAKEAQNGGAGLVVYFRKEGRALGEVVKYLVYNKRKRTGDSAENYFKRTEELAGVRDMRFQALMPDILHWFGIKKIDRMLSMSNMKHDAIVGQGIKILNRITIPDDLIPEDSQVEIDAKIQSGYFSEKKVTEDDLSCVHGRHW</sequence>
<keyword id="KW-0963">Cytoplasm</keyword>
<keyword id="KW-0342">GTP-binding</keyword>
<keyword id="KW-0378">Hydrolase</keyword>
<keyword id="KW-0479">Metal-binding</keyword>
<keyword id="KW-0547">Nucleotide-binding</keyword>
<keyword id="KW-0539">Nucleus</keyword>
<keyword id="KW-1185">Reference proteome</keyword>
<keyword id="KW-0862">Zinc</keyword>
<organism>
    <name type="scientific">Schizosaccharomyces pombe (strain 972 / ATCC 24843)</name>
    <name type="common">Fission yeast</name>
    <dbReference type="NCBI Taxonomy" id="284812"/>
    <lineage>
        <taxon>Eukaryota</taxon>
        <taxon>Fungi</taxon>
        <taxon>Dikarya</taxon>
        <taxon>Ascomycota</taxon>
        <taxon>Taphrinomycotina</taxon>
        <taxon>Schizosaccharomycetes</taxon>
        <taxon>Schizosaccharomycetales</taxon>
        <taxon>Schizosaccharomycetaceae</taxon>
        <taxon>Schizosaccharomyces</taxon>
    </lineage>
</organism>
<name>URG1_SCHPO</name>
<accession>Q9US41</accession>
<dbReference type="EC" id="3.5.4.-"/>
<dbReference type="EMBL" id="CU329670">
    <property type="protein sequence ID" value="CAB65619.1"/>
    <property type="molecule type" value="Genomic_DNA"/>
</dbReference>
<dbReference type="RefSeq" id="NP_593508.1">
    <property type="nucleotide sequence ID" value="NM_001018942.2"/>
</dbReference>
<dbReference type="SMR" id="Q9US41"/>
<dbReference type="STRING" id="284812.Q9US41"/>
<dbReference type="iPTMnet" id="Q9US41"/>
<dbReference type="PaxDb" id="4896-SPAC1002.19.1"/>
<dbReference type="EnsemblFungi" id="SPAC1002.19.1">
    <property type="protein sequence ID" value="SPAC1002.19.1:pep"/>
    <property type="gene ID" value="SPAC1002.19"/>
</dbReference>
<dbReference type="GeneID" id="2543259"/>
<dbReference type="KEGG" id="spo:2543259"/>
<dbReference type="PomBase" id="SPAC1002.19">
    <property type="gene designation" value="urg1"/>
</dbReference>
<dbReference type="VEuPathDB" id="FungiDB:SPAC1002.19"/>
<dbReference type="eggNOG" id="KOG1284">
    <property type="taxonomic scope" value="Eukaryota"/>
</dbReference>
<dbReference type="HOGENOM" id="CLU_029639_1_0_1"/>
<dbReference type="InParanoid" id="Q9US41"/>
<dbReference type="OMA" id="PIPLTWG"/>
<dbReference type="PhylomeDB" id="Q9US41"/>
<dbReference type="PRO" id="PR:Q9US41"/>
<dbReference type="Proteomes" id="UP000002485">
    <property type="component" value="Chromosome I"/>
</dbReference>
<dbReference type="GO" id="GO:0005829">
    <property type="term" value="C:cytosol"/>
    <property type="evidence" value="ECO:0007005"/>
    <property type="project" value="PomBase"/>
</dbReference>
<dbReference type="GO" id="GO:0005634">
    <property type="term" value="C:nucleus"/>
    <property type="evidence" value="ECO:0007005"/>
    <property type="project" value="PomBase"/>
</dbReference>
<dbReference type="GO" id="GO:0005525">
    <property type="term" value="F:GTP binding"/>
    <property type="evidence" value="ECO:0007669"/>
    <property type="project" value="UniProtKB-KW"/>
</dbReference>
<dbReference type="GO" id="GO:0003935">
    <property type="term" value="F:GTP cyclohydrolase II activity"/>
    <property type="evidence" value="ECO:0007669"/>
    <property type="project" value="InterPro"/>
</dbReference>
<dbReference type="GO" id="GO:0046872">
    <property type="term" value="F:metal ion binding"/>
    <property type="evidence" value="ECO:0007669"/>
    <property type="project" value="UniProtKB-KW"/>
</dbReference>
<dbReference type="GO" id="GO:0009231">
    <property type="term" value="P:riboflavin biosynthetic process"/>
    <property type="evidence" value="ECO:0007669"/>
    <property type="project" value="InterPro"/>
</dbReference>
<dbReference type="CDD" id="cd00641">
    <property type="entry name" value="GTP_cyclohydro2"/>
    <property type="match status" value="1"/>
</dbReference>
<dbReference type="FunFam" id="3.40.50.10990:FF:000013">
    <property type="entry name" value="GTP cyclohydrolase II"/>
    <property type="match status" value="1"/>
</dbReference>
<dbReference type="Gene3D" id="3.40.50.10990">
    <property type="entry name" value="GTP cyclohydrolase II"/>
    <property type="match status" value="1"/>
</dbReference>
<dbReference type="InterPro" id="IPR022163">
    <property type="entry name" value="GTP_CH_N"/>
</dbReference>
<dbReference type="InterPro" id="IPR032677">
    <property type="entry name" value="GTP_cyclohydro_II"/>
</dbReference>
<dbReference type="InterPro" id="IPR000926">
    <property type="entry name" value="RibA"/>
</dbReference>
<dbReference type="InterPro" id="IPR036144">
    <property type="entry name" value="RibA-like_sf"/>
</dbReference>
<dbReference type="NCBIfam" id="NF005536">
    <property type="entry name" value="PRK07198.1"/>
    <property type="match status" value="1"/>
</dbReference>
<dbReference type="PANTHER" id="PTHR47259">
    <property type="match status" value="1"/>
</dbReference>
<dbReference type="PANTHER" id="PTHR47259:SF2">
    <property type="entry name" value="URACIL-REGULATED PROTEIN 1"/>
    <property type="match status" value="1"/>
</dbReference>
<dbReference type="Pfam" id="PF12471">
    <property type="entry name" value="GTP_CH_N"/>
    <property type="match status" value="1"/>
</dbReference>
<dbReference type="Pfam" id="PF00925">
    <property type="entry name" value="GTP_cyclohydro2"/>
    <property type="match status" value="1"/>
</dbReference>
<dbReference type="SUPFAM" id="SSF142695">
    <property type="entry name" value="RibA-like"/>
    <property type="match status" value="1"/>
</dbReference>
<proteinExistence type="evidence at transcript level"/>
<protein>
    <recommendedName>
        <fullName>Uracil-regulated protein 1</fullName>
        <ecNumber>3.5.4.-</ecNumber>
    </recommendedName>
</protein>
<reference key="1">
    <citation type="journal article" date="2002" name="Nature">
        <title>The genome sequence of Schizosaccharomyces pombe.</title>
        <authorList>
            <person name="Wood V."/>
            <person name="Gwilliam R."/>
            <person name="Rajandream M.A."/>
            <person name="Lyne M.H."/>
            <person name="Lyne R."/>
            <person name="Stewart A."/>
            <person name="Sgouros J.G."/>
            <person name="Peat N."/>
            <person name="Hayles J."/>
            <person name="Baker S.G."/>
            <person name="Basham D."/>
            <person name="Bowman S."/>
            <person name="Brooks K."/>
            <person name="Brown D."/>
            <person name="Brown S."/>
            <person name="Chillingworth T."/>
            <person name="Churcher C.M."/>
            <person name="Collins M."/>
            <person name="Connor R."/>
            <person name="Cronin A."/>
            <person name="Davis P."/>
            <person name="Feltwell T."/>
            <person name="Fraser A."/>
            <person name="Gentles S."/>
            <person name="Goble A."/>
            <person name="Hamlin N."/>
            <person name="Harris D.E."/>
            <person name="Hidalgo J."/>
            <person name="Hodgson G."/>
            <person name="Holroyd S."/>
            <person name="Hornsby T."/>
            <person name="Howarth S."/>
            <person name="Huckle E.J."/>
            <person name="Hunt S."/>
            <person name="Jagels K."/>
            <person name="James K.D."/>
            <person name="Jones L."/>
            <person name="Jones M."/>
            <person name="Leather S."/>
            <person name="McDonald S."/>
            <person name="McLean J."/>
            <person name="Mooney P."/>
            <person name="Moule S."/>
            <person name="Mungall K.L."/>
            <person name="Murphy L.D."/>
            <person name="Niblett D."/>
            <person name="Odell C."/>
            <person name="Oliver K."/>
            <person name="O'Neil S."/>
            <person name="Pearson D."/>
            <person name="Quail M.A."/>
            <person name="Rabbinowitsch E."/>
            <person name="Rutherford K.M."/>
            <person name="Rutter S."/>
            <person name="Saunders D."/>
            <person name="Seeger K."/>
            <person name="Sharp S."/>
            <person name="Skelton J."/>
            <person name="Simmonds M.N."/>
            <person name="Squares R."/>
            <person name="Squares S."/>
            <person name="Stevens K."/>
            <person name="Taylor K."/>
            <person name="Taylor R.G."/>
            <person name="Tivey A."/>
            <person name="Walsh S.V."/>
            <person name="Warren T."/>
            <person name="Whitehead S."/>
            <person name="Woodward J.R."/>
            <person name="Volckaert G."/>
            <person name="Aert R."/>
            <person name="Robben J."/>
            <person name="Grymonprez B."/>
            <person name="Weltjens I."/>
            <person name="Vanstreels E."/>
            <person name="Rieger M."/>
            <person name="Schaefer M."/>
            <person name="Mueller-Auer S."/>
            <person name="Gabel C."/>
            <person name="Fuchs M."/>
            <person name="Duesterhoeft A."/>
            <person name="Fritzc C."/>
            <person name="Holzer E."/>
            <person name="Moestl D."/>
            <person name="Hilbert H."/>
            <person name="Borzym K."/>
            <person name="Langer I."/>
            <person name="Beck A."/>
            <person name="Lehrach H."/>
            <person name="Reinhardt R."/>
            <person name="Pohl T.M."/>
            <person name="Eger P."/>
            <person name="Zimmermann W."/>
            <person name="Wedler H."/>
            <person name="Wambutt R."/>
            <person name="Purnelle B."/>
            <person name="Goffeau A."/>
            <person name="Cadieu E."/>
            <person name="Dreano S."/>
            <person name="Gloux S."/>
            <person name="Lelaure V."/>
            <person name="Mottier S."/>
            <person name="Galibert F."/>
            <person name="Aves S.J."/>
            <person name="Xiang Z."/>
            <person name="Hunt C."/>
            <person name="Moore K."/>
            <person name="Hurst S.M."/>
            <person name="Lucas M."/>
            <person name="Rochet M."/>
            <person name="Gaillardin C."/>
            <person name="Tallada V.A."/>
            <person name="Garzon A."/>
            <person name="Thode G."/>
            <person name="Daga R.R."/>
            <person name="Cruzado L."/>
            <person name="Jimenez J."/>
            <person name="Sanchez M."/>
            <person name="del Rey F."/>
            <person name="Benito J."/>
            <person name="Dominguez A."/>
            <person name="Revuelta J.L."/>
            <person name="Moreno S."/>
            <person name="Armstrong J."/>
            <person name="Forsburg S.L."/>
            <person name="Cerutti L."/>
            <person name="Lowe T."/>
            <person name="McCombie W.R."/>
            <person name="Paulsen I."/>
            <person name="Potashkin J."/>
            <person name="Shpakovski G.V."/>
            <person name="Ussery D."/>
            <person name="Barrell B.G."/>
            <person name="Nurse P."/>
        </authorList>
    </citation>
    <scope>NUCLEOTIDE SEQUENCE [LARGE SCALE GENOMIC DNA]</scope>
    <source>
        <strain>972 / ATCC 24843</strain>
    </source>
</reference>
<reference key="2">
    <citation type="journal article" date="2006" name="Nat. Biotechnol.">
        <title>ORFeome cloning and global analysis of protein localization in the fission yeast Schizosaccharomyces pombe.</title>
        <authorList>
            <person name="Matsuyama A."/>
            <person name="Arai R."/>
            <person name="Yashiroda Y."/>
            <person name="Shirai A."/>
            <person name="Kamata A."/>
            <person name="Sekido S."/>
            <person name="Kobayashi Y."/>
            <person name="Hashimoto A."/>
            <person name="Hamamoto M."/>
            <person name="Hiraoka Y."/>
            <person name="Horinouchi S."/>
            <person name="Yoshida M."/>
        </authorList>
    </citation>
    <scope>SUBCELLULAR LOCATION [LARGE SCALE ANALYSIS]</scope>
</reference>
<reference key="3">
    <citation type="journal article" date="2008" name="PLoS ONE">
        <title>urg1: a uracil-regulatable promoter system for fission yeast with short induction and repression times.</title>
        <authorList>
            <person name="Watt S."/>
            <person name="Mata J."/>
            <person name="Lopez-Maury L."/>
            <person name="Marguerat S."/>
            <person name="Burns G."/>
            <person name="Baehler J."/>
        </authorList>
    </citation>
    <scope>INDUCTION</scope>
</reference>